<sequence>MVGVSVLGISGSVGTSTVKVLRQFPDQFDLRSFSVHSNWNVAKALVEEFSPEVICITDPKLVGKFGDSYLSTKILYGDKALIDLVQLPSVGVVVTAVMGARGVLPTIAAIEAGKKIAIANKETLVTFGPLINRLVAKHNTVMVPVDSEHNALFQLIERETRSNIRAITLTASGGSFRTLPLEALEHVSVKQALNHPTWSMGPKITVDSAGLINKGLEVIEAHFLFGFSYDEIEVVIHPQSITHGIIETTDGACLLYASHPDMVYPIAHSLFYPNPTPQMLIERKPSTWNTFEFFPPDTKRYPGLLLAYQAGKAGGAAPGIFNAANEEAVALFLEEKISFTTIPRLIESALNQIENVFPETLDGYLEKDQETRNYIQREFNQGGVTT</sequence>
<gene>
    <name evidence="1" type="primary">dxr</name>
    <name type="ordered locus">LBF_2531</name>
</gene>
<organism>
    <name type="scientific">Leptospira biflexa serovar Patoc (strain Patoc 1 / Ames)</name>
    <dbReference type="NCBI Taxonomy" id="355278"/>
    <lineage>
        <taxon>Bacteria</taxon>
        <taxon>Pseudomonadati</taxon>
        <taxon>Spirochaetota</taxon>
        <taxon>Spirochaetia</taxon>
        <taxon>Leptospirales</taxon>
        <taxon>Leptospiraceae</taxon>
        <taxon>Leptospira</taxon>
    </lineage>
</organism>
<accession>B0SDN1</accession>
<proteinExistence type="inferred from homology"/>
<evidence type="ECO:0000255" key="1">
    <source>
        <dbReference type="HAMAP-Rule" id="MF_00183"/>
    </source>
</evidence>
<comment type="function">
    <text evidence="1">Catalyzes the NADPH-dependent rearrangement and reduction of 1-deoxy-D-xylulose-5-phosphate (DXP) to 2-C-methyl-D-erythritol 4-phosphate (MEP).</text>
</comment>
<comment type="catalytic activity">
    <reaction evidence="1">
        <text>2-C-methyl-D-erythritol 4-phosphate + NADP(+) = 1-deoxy-D-xylulose 5-phosphate + NADPH + H(+)</text>
        <dbReference type="Rhea" id="RHEA:13717"/>
        <dbReference type="ChEBI" id="CHEBI:15378"/>
        <dbReference type="ChEBI" id="CHEBI:57783"/>
        <dbReference type="ChEBI" id="CHEBI:57792"/>
        <dbReference type="ChEBI" id="CHEBI:58262"/>
        <dbReference type="ChEBI" id="CHEBI:58349"/>
        <dbReference type="EC" id="1.1.1.267"/>
    </reaction>
    <physiologicalReaction direction="right-to-left" evidence="1">
        <dbReference type="Rhea" id="RHEA:13719"/>
    </physiologicalReaction>
</comment>
<comment type="cofactor">
    <cofactor evidence="1">
        <name>Mg(2+)</name>
        <dbReference type="ChEBI" id="CHEBI:18420"/>
    </cofactor>
    <cofactor evidence="1">
        <name>Mn(2+)</name>
        <dbReference type="ChEBI" id="CHEBI:29035"/>
    </cofactor>
</comment>
<comment type="pathway">
    <text evidence="1">Isoprenoid biosynthesis; isopentenyl diphosphate biosynthesis via DXP pathway; isopentenyl diphosphate from 1-deoxy-D-xylulose 5-phosphate: step 1/6.</text>
</comment>
<comment type="similarity">
    <text evidence="1">Belongs to the DXR family.</text>
</comment>
<reference key="1">
    <citation type="journal article" date="2008" name="PLoS ONE">
        <title>Genome sequence of the saprophyte Leptospira biflexa provides insights into the evolution of Leptospira and the pathogenesis of leptospirosis.</title>
        <authorList>
            <person name="Picardeau M."/>
            <person name="Bulach D.M."/>
            <person name="Bouchier C."/>
            <person name="Zuerner R.L."/>
            <person name="Zidane N."/>
            <person name="Wilson P.J."/>
            <person name="Creno S."/>
            <person name="Kuczek E.S."/>
            <person name="Bommezzadri S."/>
            <person name="Davis J.C."/>
            <person name="McGrath A."/>
            <person name="Johnson M.J."/>
            <person name="Boursaux-Eude C."/>
            <person name="Seemann T."/>
            <person name="Rouy Z."/>
            <person name="Coppel R.L."/>
            <person name="Rood J.I."/>
            <person name="Lajus A."/>
            <person name="Davies J.K."/>
            <person name="Medigue C."/>
            <person name="Adler B."/>
        </authorList>
    </citation>
    <scope>NUCLEOTIDE SEQUENCE [LARGE SCALE GENOMIC DNA]</scope>
    <source>
        <strain>Patoc 1 / Ames</strain>
    </source>
</reference>
<keyword id="KW-0414">Isoprene biosynthesis</keyword>
<keyword id="KW-0464">Manganese</keyword>
<keyword id="KW-0479">Metal-binding</keyword>
<keyword id="KW-0521">NADP</keyword>
<keyword id="KW-0560">Oxidoreductase</keyword>
<feature type="chain" id="PRO_1000098503" description="1-deoxy-D-xylulose 5-phosphate reductoisomerase">
    <location>
        <begin position="1"/>
        <end position="386"/>
    </location>
</feature>
<feature type="binding site" evidence="1">
    <location>
        <position position="10"/>
    </location>
    <ligand>
        <name>NADPH</name>
        <dbReference type="ChEBI" id="CHEBI:57783"/>
    </ligand>
</feature>
<feature type="binding site" evidence="1">
    <location>
        <position position="11"/>
    </location>
    <ligand>
        <name>NADPH</name>
        <dbReference type="ChEBI" id="CHEBI:57783"/>
    </ligand>
</feature>
<feature type="binding site" evidence="1">
    <location>
        <position position="12"/>
    </location>
    <ligand>
        <name>NADPH</name>
        <dbReference type="ChEBI" id="CHEBI:57783"/>
    </ligand>
</feature>
<feature type="binding site" evidence="1">
    <location>
        <position position="13"/>
    </location>
    <ligand>
        <name>NADPH</name>
        <dbReference type="ChEBI" id="CHEBI:57783"/>
    </ligand>
</feature>
<feature type="binding site" evidence="1">
    <location>
        <position position="38"/>
    </location>
    <ligand>
        <name>NADPH</name>
        <dbReference type="ChEBI" id="CHEBI:57783"/>
    </ligand>
</feature>
<feature type="binding site" evidence="1">
    <location>
        <position position="120"/>
    </location>
    <ligand>
        <name>NADPH</name>
        <dbReference type="ChEBI" id="CHEBI:57783"/>
    </ligand>
</feature>
<feature type="binding site" evidence="1">
    <location>
        <position position="121"/>
    </location>
    <ligand>
        <name>1-deoxy-D-xylulose 5-phosphate</name>
        <dbReference type="ChEBI" id="CHEBI:57792"/>
    </ligand>
</feature>
<feature type="binding site" evidence="1">
    <location>
        <position position="122"/>
    </location>
    <ligand>
        <name>NADPH</name>
        <dbReference type="ChEBI" id="CHEBI:57783"/>
    </ligand>
</feature>
<feature type="binding site" evidence="1">
    <location>
        <position position="146"/>
    </location>
    <ligand>
        <name>Mn(2+)</name>
        <dbReference type="ChEBI" id="CHEBI:29035"/>
    </ligand>
</feature>
<feature type="binding site" evidence="1">
    <location>
        <position position="147"/>
    </location>
    <ligand>
        <name>1-deoxy-D-xylulose 5-phosphate</name>
        <dbReference type="ChEBI" id="CHEBI:57792"/>
    </ligand>
</feature>
<feature type="binding site" evidence="1">
    <location>
        <position position="148"/>
    </location>
    <ligand>
        <name>1-deoxy-D-xylulose 5-phosphate</name>
        <dbReference type="ChEBI" id="CHEBI:57792"/>
    </ligand>
</feature>
<feature type="binding site" evidence="1">
    <location>
        <position position="148"/>
    </location>
    <ligand>
        <name>Mn(2+)</name>
        <dbReference type="ChEBI" id="CHEBI:29035"/>
    </ligand>
</feature>
<feature type="binding site" evidence="1">
    <location>
        <position position="172"/>
    </location>
    <ligand>
        <name>1-deoxy-D-xylulose 5-phosphate</name>
        <dbReference type="ChEBI" id="CHEBI:57792"/>
    </ligand>
</feature>
<feature type="binding site" evidence="1">
    <location>
        <position position="195"/>
    </location>
    <ligand>
        <name>1-deoxy-D-xylulose 5-phosphate</name>
        <dbReference type="ChEBI" id="CHEBI:57792"/>
    </ligand>
</feature>
<feature type="binding site" evidence="1">
    <location>
        <position position="201"/>
    </location>
    <ligand>
        <name>NADPH</name>
        <dbReference type="ChEBI" id="CHEBI:57783"/>
    </ligand>
</feature>
<feature type="binding site" evidence="1">
    <location>
        <position position="208"/>
    </location>
    <ligand>
        <name>1-deoxy-D-xylulose 5-phosphate</name>
        <dbReference type="ChEBI" id="CHEBI:57792"/>
    </ligand>
</feature>
<feature type="binding site" evidence="1">
    <location>
        <position position="213"/>
    </location>
    <ligand>
        <name>1-deoxy-D-xylulose 5-phosphate</name>
        <dbReference type="ChEBI" id="CHEBI:57792"/>
    </ligand>
</feature>
<feature type="binding site" evidence="1">
    <location>
        <position position="214"/>
    </location>
    <ligand>
        <name>1-deoxy-D-xylulose 5-phosphate</name>
        <dbReference type="ChEBI" id="CHEBI:57792"/>
    </ligand>
</feature>
<feature type="binding site" evidence="1">
    <location>
        <position position="217"/>
    </location>
    <ligand>
        <name>1-deoxy-D-xylulose 5-phosphate</name>
        <dbReference type="ChEBI" id="CHEBI:57792"/>
    </ligand>
</feature>
<feature type="binding site" evidence="1">
    <location>
        <position position="217"/>
    </location>
    <ligand>
        <name>Mn(2+)</name>
        <dbReference type="ChEBI" id="CHEBI:29035"/>
    </ligand>
</feature>
<name>DXR_LEPBA</name>
<dbReference type="EC" id="1.1.1.267" evidence="1"/>
<dbReference type="EMBL" id="CP000777">
    <property type="protein sequence ID" value="ABZ95015.1"/>
    <property type="molecule type" value="Genomic_DNA"/>
</dbReference>
<dbReference type="RefSeq" id="WP_012389550.1">
    <property type="nucleotide sequence ID" value="NC_010842.1"/>
</dbReference>
<dbReference type="SMR" id="B0SDN1"/>
<dbReference type="KEGG" id="lbf:LBF_2531"/>
<dbReference type="HOGENOM" id="CLU_035714_4_0_12"/>
<dbReference type="UniPathway" id="UPA00056">
    <property type="reaction ID" value="UER00092"/>
</dbReference>
<dbReference type="GO" id="GO:0030604">
    <property type="term" value="F:1-deoxy-D-xylulose-5-phosphate reductoisomerase activity"/>
    <property type="evidence" value="ECO:0007669"/>
    <property type="project" value="UniProtKB-UniRule"/>
</dbReference>
<dbReference type="GO" id="GO:0030145">
    <property type="term" value="F:manganese ion binding"/>
    <property type="evidence" value="ECO:0007669"/>
    <property type="project" value="TreeGrafter"/>
</dbReference>
<dbReference type="GO" id="GO:0070402">
    <property type="term" value="F:NADPH binding"/>
    <property type="evidence" value="ECO:0007669"/>
    <property type="project" value="InterPro"/>
</dbReference>
<dbReference type="GO" id="GO:0051484">
    <property type="term" value="P:isopentenyl diphosphate biosynthetic process, methylerythritol 4-phosphate pathway involved in terpenoid biosynthetic process"/>
    <property type="evidence" value="ECO:0007669"/>
    <property type="project" value="TreeGrafter"/>
</dbReference>
<dbReference type="FunFam" id="3.40.50.720:FF:000045">
    <property type="entry name" value="1-deoxy-D-xylulose 5-phosphate reductoisomerase"/>
    <property type="match status" value="1"/>
</dbReference>
<dbReference type="Gene3D" id="1.10.1740.10">
    <property type="match status" value="1"/>
</dbReference>
<dbReference type="Gene3D" id="3.40.50.720">
    <property type="entry name" value="NAD(P)-binding Rossmann-like Domain"/>
    <property type="match status" value="1"/>
</dbReference>
<dbReference type="HAMAP" id="MF_00183">
    <property type="entry name" value="DXP_reductoisom"/>
    <property type="match status" value="1"/>
</dbReference>
<dbReference type="InterPro" id="IPR003821">
    <property type="entry name" value="DXP_reductoisomerase"/>
</dbReference>
<dbReference type="InterPro" id="IPR013644">
    <property type="entry name" value="DXP_reductoisomerase_C"/>
</dbReference>
<dbReference type="InterPro" id="IPR013512">
    <property type="entry name" value="DXP_reductoisomerase_N"/>
</dbReference>
<dbReference type="InterPro" id="IPR026877">
    <property type="entry name" value="DXPR_C"/>
</dbReference>
<dbReference type="InterPro" id="IPR036169">
    <property type="entry name" value="DXPR_C_sf"/>
</dbReference>
<dbReference type="InterPro" id="IPR036291">
    <property type="entry name" value="NAD(P)-bd_dom_sf"/>
</dbReference>
<dbReference type="NCBIfam" id="TIGR00243">
    <property type="entry name" value="Dxr"/>
    <property type="match status" value="1"/>
</dbReference>
<dbReference type="PANTHER" id="PTHR30525">
    <property type="entry name" value="1-DEOXY-D-XYLULOSE 5-PHOSPHATE REDUCTOISOMERASE"/>
    <property type="match status" value="1"/>
</dbReference>
<dbReference type="PANTHER" id="PTHR30525:SF0">
    <property type="entry name" value="1-DEOXY-D-XYLULOSE 5-PHOSPHATE REDUCTOISOMERASE, CHLOROPLASTIC"/>
    <property type="match status" value="1"/>
</dbReference>
<dbReference type="Pfam" id="PF08436">
    <property type="entry name" value="DXP_redisom_C"/>
    <property type="match status" value="1"/>
</dbReference>
<dbReference type="Pfam" id="PF02670">
    <property type="entry name" value="DXP_reductoisom"/>
    <property type="match status" value="1"/>
</dbReference>
<dbReference type="Pfam" id="PF13288">
    <property type="entry name" value="DXPR_C"/>
    <property type="match status" value="1"/>
</dbReference>
<dbReference type="PIRSF" id="PIRSF006205">
    <property type="entry name" value="Dxp_reductismrs"/>
    <property type="match status" value="1"/>
</dbReference>
<dbReference type="SUPFAM" id="SSF69055">
    <property type="entry name" value="1-deoxy-D-xylulose-5-phosphate reductoisomerase, C-terminal domain"/>
    <property type="match status" value="1"/>
</dbReference>
<dbReference type="SUPFAM" id="SSF55347">
    <property type="entry name" value="Glyceraldehyde-3-phosphate dehydrogenase-like, C-terminal domain"/>
    <property type="match status" value="1"/>
</dbReference>
<dbReference type="SUPFAM" id="SSF51735">
    <property type="entry name" value="NAD(P)-binding Rossmann-fold domains"/>
    <property type="match status" value="1"/>
</dbReference>
<protein>
    <recommendedName>
        <fullName evidence="1">1-deoxy-D-xylulose 5-phosphate reductoisomerase</fullName>
        <shortName evidence="1">DXP reductoisomerase</shortName>
        <ecNumber evidence="1">1.1.1.267</ecNumber>
    </recommendedName>
    <alternativeName>
        <fullName evidence="1">1-deoxyxylulose-5-phosphate reductoisomerase</fullName>
    </alternativeName>
    <alternativeName>
        <fullName evidence="1">2-C-methyl-D-erythritol 4-phosphate synthase</fullName>
    </alternativeName>
</protein>